<organism>
    <name type="scientific">Dictyostelium discoideum</name>
    <name type="common">Social amoeba</name>
    <dbReference type="NCBI Taxonomy" id="44689"/>
    <lineage>
        <taxon>Eukaryota</taxon>
        <taxon>Amoebozoa</taxon>
        <taxon>Evosea</taxon>
        <taxon>Eumycetozoa</taxon>
        <taxon>Dictyostelia</taxon>
        <taxon>Dictyosteliales</taxon>
        <taxon>Dictyosteliaceae</taxon>
        <taxon>Dictyostelium</taxon>
    </lineage>
</organism>
<evidence type="ECO:0000250" key="1"/>
<evidence type="ECO:0000255" key="2"/>
<evidence type="ECO:0000255" key="3">
    <source>
        <dbReference type="PROSITE-ProRule" id="PRU00978"/>
    </source>
</evidence>
<evidence type="ECO:0000256" key="4">
    <source>
        <dbReference type="SAM" id="MobiDB-lite"/>
    </source>
</evidence>
<evidence type="ECO:0000305" key="5"/>
<reference key="1">
    <citation type="journal article" date="2005" name="Nature">
        <title>The genome of the social amoeba Dictyostelium discoideum.</title>
        <authorList>
            <person name="Eichinger L."/>
            <person name="Pachebat J.A."/>
            <person name="Gloeckner G."/>
            <person name="Rajandream M.A."/>
            <person name="Sucgang R."/>
            <person name="Berriman M."/>
            <person name="Song J."/>
            <person name="Olsen R."/>
            <person name="Szafranski K."/>
            <person name="Xu Q."/>
            <person name="Tunggal B."/>
            <person name="Kummerfeld S."/>
            <person name="Madera M."/>
            <person name="Konfortov B.A."/>
            <person name="Rivero F."/>
            <person name="Bankier A.T."/>
            <person name="Lehmann R."/>
            <person name="Hamlin N."/>
            <person name="Davies R."/>
            <person name="Gaudet P."/>
            <person name="Fey P."/>
            <person name="Pilcher K."/>
            <person name="Chen G."/>
            <person name="Saunders D."/>
            <person name="Sodergren E.J."/>
            <person name="Davis P."/>
            <person name="Kerhornou A."/>
            <person name="Nie X."/>
            <person name="Hall N."/>
            <person name="Anjard C."/>
            <person name="Hemphill L."/>
            <person name="Bason N."/>
            <person name="Farbrother P."/>
            <person name="Desany B."/>
            <person name="Just E."/>
            <person name="Morio T."/>
            <person name="Rost R."/>
            <person name="Churcher C.M."/>
            <person name="Cooper J."/>
            <person name="Haydock S."/>
            <person name="van Driessche N."/>
            <person name="Cronin A."/>
            <person name="Goodhead I."/>
            <person name="Muzny D.M."/>
            <person name="Mourier T."/>
            <person name="Pain A."/>
            <person name="Lu M."/>
            <person name="Harper D."/>
            <person name="Lindsay R."/>
            <person name="Hauser H."/>
            <person name="James K.D."/>
            <person name="Quiles M."/>
            <person name="Madan Babu M."/>
            <person name="Saito T."/>
            <person name="Buchrieser C."/>
            <person name="Wardroper A."/>
            <person name="Felder M."/>
            <person name="Thangavelu M."/>
            <person name="Johnson D."/>
            <person name="Knights A."/>
            <person name="Loulseged H."/>
            <person name="Mungall K.L."/>
            <person name="Oliver K."/>
            <person name="Price C."/>
            <person name="Quail M.A."/>
            <person name="Urushihara H."/>
            <person name="Hernandez J."/>
            <person name="Rabbinowitsch E."/>
            <person name="Steffen D."/>
            <person name="Sanders M."/>
            <person name="Ma J."/>
            <person name="Kohara Y."/>
            <person name="Sharp S."/>
            <person name="Simmonds M.N."/>
            <person name="Spiegler S."/>
            <person name="Tivey A."/>
            <person name="Sugano S."/>
            <person name="White B."/>
            <person name="Walker D."/>
            <person name="Woodward J.R."/>
            <person name="Winckler T."/>
            <person name="Tanaka Y."/>
            <person name="Shaulsky G."/>
            <person name="Schleicher M."/>
            <person name="Weinstock G.M."/>
            <person name="Rosenthal A."/>
            <person name="Cox E.C."/>
            <person name="Chisholm R.L."/>
            <person name="Gibbs R.A."/>
            <person name="Loomis W.F."/>
            <person name="Platzer M."/>
            <person name="Kay R.R."/>
            <person name="Williams J.G."/>
            <person name="Dear P.H."/>
            <person name="Noegel A.A."/>
            <person name="Barrell B.G."/>
            <person name="Kuspa A."/>
        </authorList>
    </citation>
    <scope>NUCLEOTIDE SEQUENCE [LARGE SCALE GENOMIC DNA]</scope>
    <source>
        <strain>AX4</strain>
    </source>
</reference>
<reference key="2">
    <citation type="journal article" date="2006" name="Development">
        <title>bZIP transcription factor interactions regulate DIF responses in Dictyostelium.</title>
        <authorList>
            <person name="Huang E."/>
            <person name="Blagg S.L."/>
            <person name="Keller T."/>
            <person name="Katoh M."/>
            <person name="Shaulsky G."/>
            <person name="Thompson C.R.L."/>
        </authorList>
    </citation>
    <scope>IDENTIFICATION</scope>
</reference>
<proteinExistence type="inferred from homology"/>
<feature type="chain" id="PRO_0000384404" description="Probable basic-leucine zipper transcription factor D">
    <location>
        <begin position="1"/>
        <end position="834"/>
    </location>
</feature>
<feature type="domain" description="bZIP" evidence="3">
    <location>
        <begin position="391"/>
        <end position="454"/>
    </location>
</feature>
<feature type="region of interest" description="Disordered" evidence="4">
    <location>
        <begin position="83"/>
        <end position="160"/>
    </location>
</feature>
<feature type="region of interest" description="Disordered" evidence="4">
    <location>
        <begin position="378"/>
        <end position="405"/>
    </location>
</feature>
<feature type="region of interest" description="Basic motif" evidence="3">
    <location>
        <begin position="393"/>
        <end position="402"/>
    </location>
</feature>
<feature type="region of interest" description="Leucine-zipper" evidence="3">
    <location>
        <begin position="407"/>
        <end position="414"/>
    </location>
</feature>
<feature type="region of interest" description="Disordered" evidence="4">
    <location>
        <begin position="455"/>
        <end position="504"/>
    </location>
</feature>
<feature type="region of interest" description="Disordered" evidence="4">
    <location>
        <begin position="550"/>
        <end position="712"/>
    </location>
</feature>
<feature type="coiled-coil region" evidence="2">
    <location>
        <begin position="211"/>
        <end position="246"/>
    </location>
</feature>
<feature type="compositionally biased region" description="Polar residues" evidence="4">
    <location>
        <begin position="90"/>
        <end position="111"/>
    </location>
</feature>
<feature type="compositionally biased region" description="Low complexity" evidence="4">
    <location>
        <begin position="119"/>
        <end position="157"/>
    </location>
</feature>
<feature type="compositionally biased region" description="Polar residues" evidence="4">
    <location>
        <begin position="550"/>
        <end position="595"/>
    </location>
</feature>
<feature type="compositionally biased region" description="Low complexity" evidence="4">
    <location>
        <begin position="616"/>
        <end position="651"/>
    </location>
</feature>
<feature type="compositionally biased region" description="Low complexity" evidence="4">
    <location>
        <begin position="694"/>
        <end position="707"/>
    </location>
</feature>
<sequence>MDIDYENEISIVLEAKHNQHLNNNNNGCGNANNINNENNFLQDDLVYNFLSDEVTLGSDCTTPYTLNNNHIVNSNYIINNNNNNNNMLNDHSSSPMRVPNSSPSLYNNSIESPELVYHDNSNNNNNNNNNINVNDINVNDINSNSTNNNESNNNSSSEGELPCLVDIQQYQYQDMLPFDQQPVVVMQNPIITTTTTTTTTTATIEQQINPSEQQQQQQQQQQQQQQQQQQQQQQQQQHQHLLQEHQHVVNEEVLHMIDPSVDLTNTYMDAAGISDIIASDSSTTTSPSSPSTSNMFLTPMVTTTTTSETSSSSDSSVNIIPNNTNTITNILIKEEDTNNGNNNKKSKKRTIDSRVQNIVHPLTREELLKIAGKEPVQVVDPPTHNQEDERNVKKQRRLIKNRESAQLSRMRKKIYIEDLEKTISDLTQDNSSLKEEVLYLQGLVKQLAAQNSNSNNNSVIDINNNNVNNSQQQQQQHQQQQQLNNSNNNNNNNNNNSTNKQQQSKNVKAAGVCLLLIFFSLGVFFQPPQSSTQRFGAITSFDVKPTHSILSMSDSESSPQKSLRLSSNHHSLPDGTFNTIPIDQQTTATTNTKSLPSYVLNNNDDSDSDYENVNINNNNNNNNNNNNNNNNNNNNNNNNNNNNNNNNNNNNIKRKQHQQNPQSDSFQNRKKIKINLATENTEGDGPLVSKSSATTTTTTTTTTTTSTPKTPQISEDVSIDEIEEPMVHSSQQYIVCSDSPRIVSNNITQTTESLLNSNSTNPITIGLLLPAESLNLHNIVNNIGGGERSILEISCQVSNIRVWNPLSIDIDHQSSIVPASSSSSSASSIFTNHF</sequence>
<name>BZPD_DICDI</name>
<keyword id="KW-0175">Coiled coil</keyword>
<keyword id="KW-0238">DNA-binding</keyword>
<keyword id="KW-0539">Nucleus</keyword>
<keyword id="KW-1185">Reference proteome</keyword>
<keyword id="KW-0804">Transcription</keyword>
<keyword id="KW-0805">Transcription regulation</keyword>
<accession>Q54Y73</accession>
<gene>
    <name type="primary">bzpD</name>
    <name type="ORF">DDB_G0278379</name>
</gene>
<comment type="function">
    <text evidence="1">Probable transcriptional regulator.</text>
</comment>
<comment type="subcellular location">
    <subcellularLocation>
        <location evidence="3">Nucleus</location>
    </subcellularLocation>
</comment>
<comment type="similarity">
    <text evidence="5">Belongs to the bZIP family.</text>
</comment>
<dbReference type="EMBL" id="AAFI02000023">
    <property type="protein sequence ID" value="EAL68362.1"/>
    <property type="molecule type" value="Genomic_DNA"/>
</dbReference>
<dbReference type="RefSeq" id="XP_642329.1">
    <property type="nucleotide sequence ID" value="XM_637237.1"/>
</dbReference>
<dbReference type="SMR" id="Q54Y73"/>
<dbReference type="FunCoup" id="Q54Y73">
    <property type="interactions" value="687"/>
</dbReference>
<dbReference type="STRING" id="44689.Q54Y73"/>
<dbReference type="PaxDb" id="44689-DDB0220090"/>
<dbReference type="EnsemblProtists" id="EAL68362">
    <property type="protein sequence ID" value="EAL68362"/>
    <property type="gene ID" value="DDB_G0278379"/>
</dbReference>
<dbReference type="GeneID" id="8621535"/>
<dbReference type="KEGG" id="ddi:DDB_G0278379"/>
<dbReference type="dictyBase" id="DDB_G0278379">
    <property type="gene designation" value="bzpD"/>
</dbReference>
<dbReference type="VEuPathDB" id="AmoebaDB:DDB_G0278379"/>
<dbReference type="eggNOG" id="ENOG502RSPE">
    <property type="taxonomic scope" value="Eukaryota"/>
</dbReference>
<dbReference type="HOGENOM" id="CLU_340528_0_0_1"/>
<dbReference type="InParanoid" id="Q54Y73"/>
<dbReference type="OMA" id="ANDHMIS"/>
<dbReference type="PRO" id="PR:Q54Y73"/>
<dbReference type="Proteomes" id="UP000002195">
    <property type="component" value="Chromosome 3"/>
</dbReference>
<dbReference type="GO" id="GO:0005634">
    <property type="term" value="C:nucleus"/>
    <property type="evidence" value="ECO:0000318"/>
    <property type="project" value="GO_Central"/>
</dbReference>
<dbReference type="GO" id="GO:0003700">
    <property type="term" value="F:DNA-binding transcription factor activity"/>
    <property type="evidence" value="ECO:0007669"/>
    <property type="project" value="InterPro"/>
</dbReference>
<dbReference type="GO" id="GO:0043565">
    <property type="term" value="F:sequence-specific DNA binding"/>
    <property type="evidence" value="ECO:0000318"/>
    <property type="project" value="GO_Central"/>
</dbReference>
<dbReference type="GO" id="GO:0010468">
    <property type="term" value="P:regulation of gene expression"/>
    <property type="evidence" value="ECO:0000318"/>
    <property type="project" value="GO_Central"/>
</dbReference>
<dbReference type="CDD" id="cd14704">
    <property type="entry name" value="bZIP_HY5-like"/>
    <property type="match status" value="1"/>
</dbReference>
<dbReference type="Gene3D" id="1.20.5.170">
    <property type="match status" value="1"/>
</dbReference>
<dbReference type="InterPro" id="IPR004827">
    <property type="entry name" value="bZIP"/>
</dbReference>
<dbReference type="InterPro" id="IPR046347">
    <property type="entry name" value="bZIP_sf"/>
</dbReference>
<dbReference type="PANTHER" id="PTHR14312:SF7">
    <property type="entry name" value="BASIC-LEUCINE ZIPPER TRANSCRIPTION FACTOR B-RELATED"/>
    <property type="match status" value="1"/>
</dbReference>
<dbReference type="PANTHER" id="PTHR14312">
    <property type="entry name" value="CREB/ATF BZIP TRANSCRIPTION FACTOR"/>
    <property type="match status" value="1"/>
</dbReference>
<dbReference type="Pfam" id="PF00170">
    <property type="entry name" value="bZIP_1"/>
    <property type="match status" value="1"/>
</dbReference>
<dbReference type="SMART" id="SM00338">
    <property type="entry name" value="BRLZ"/>
    <property type="match status" value="1"/>
</dbReference>
<dbReference type="SUPFAM" id="SSF57959">
    <property type="entry name" value="Leucine zipper domain"/>
    <property type="match status" value="1"/>
</dbReference>
<dbReference type="PROSITE" id="PS50217">
    <property type="entry name" value="BZIP"/>
    <property type="match status" value="1"/>
</dbReference>
<protein>
    <recommendedName>
        <fullName>Probable basic-leucine zipper transcription factor D</fullName>
    </recommendedName>
</protein>